<keyword id="KW-1185">Reference proteome</keyword>
<keyword id="KW-0687">Ribonucleoprotein</keyword>
<keyword id="KW-0689">Ribosomal protein</keyword>
<keyword id="KW-0694">RNA-binding</keyword>
<keyword id="KW-0699">rRNA-binding</keyword>
<keyword id="KW-0820">tRNA-binding</keyword>
<gene>
    <name evidence="1" type="primary">rplE</name>
    <name type="ordered locus">PSHAa2818</name>
</gene>
<name>RL5_PSET1</name>
<protein>
    <recommendedName>
        <fullName evidence="1">Large ribosomal subunit protein uL5</fullName>
    </recommendedName>
    <alternativeName>
        <fullName evidence="2">50S ribosomal protein L5</fullName>
    </alternativeName>
</protein>
<accession>Q3IJJ7</accession>
<organism>
    <name type="scientific">Pseudoalteromonas translucida (strain TAC 125)</name>
    <dbReference type="NCBI Taxonomy" id="326442"/>
    <lineage>
        <taxon>Bacteria</taxon>
        <taxon>Pseudomonadati</taxon>
        <taxon>Pseudomonadota</taxon>
        <taxon>Gammaproteobacteria</taxon>
        <taxon>Alteromonadales</taxon>
        <taxon>Pseudoalteromonadaceae</taxon>
        <taxon>Pseudoalteromonas</taxon>
    </lineage>
</organism>
<evidence type="ECO:0000255" key="1">
    <source>
        <dbReference type="HAMAP-Rule" id="MF_01333"/>
    </source>
</evidence>
<evidence type="ECO:0000305" key="2"/>
<proteinExistence type="inferred from homology"/>
<sequence>MAKLHEVYKDKVVAELQEKFGFSSVMQVPLIEKITLNMGVGEALADKKILDNAVADLAAISGQKPLITKARKSVAGFKVREGYPIGCKVTLRGERMWDFFERLVSIAIPRIRDFRGVSAKSFDGRGNYSMGVREQIIFPEIDYDKVDRVRGMDITITTSAKSDEEGRALLEAFNFPFKK</sequence>
<comment type="function">
    <text evidence="1">This is one of the proteins that bind and probably mediate the attachment of the 5S RNA into the large ribosomal subunit, where it forms part of the central protuberance. In the 70S ribosome it contacts protein S13 of the 30S subunit (bridge B1b), connecting the 2 subunits; this bridge is implicated in subunit movement. Contacts the P site tRNA; the 5S rRNA and some of its associated proteins might help stabilize positioning of ribosome-bound tRNAs.</text>
</comment>
<comment type="subunit">
    <text evidence="1">Part of the 50S ribosomal subunit; part of the 5S rRNA/L5/L18/L25 subcomplex. Contacts the 5S rRNA and the P site tRNA. Forms a bridge to the 30S subunit in the 70S ribosome.</text>
</comment>
<comment type="similarity">
    <text evidence="1">Belongs to the universal ribosomal protein uL5 family.</text>
</comment>
<dbReference type="EMBL" id="CR954246">
    <property type="protein sequence ID" value="CAI87855.1"/>
    <property type="molecule type" value="Genomic_DNA"/>
</dbReference>
<dbReference type="SMR" id="Q3IJJ7"/>
<dbReference type="STRING" id="326442.PSHAa2818"/>
<dbReference type="KEGG" id="pha:PSHAa2818"/>
<dbReference type="PATRIC" id="fig|326442.8.peg.2717"/>
<dbReference type="eggNOG" id="COG0094">
    <property type="taxonomic scope" value="Bacteria"/>
</dbReference>
<dbReference type="HOGENOM" id="CLU_061015_2_1_6"/>
<dbReference type="BioCyc" id="PHAL326442:PSHA_RS13835-MONOMER"/>
<dbReference type="Proteomes" id="UP000006843">
    <property type="component" value="Chromosome I"/>
</dbReference>
<dbReference type="GO" id="GO:1990904">
    <property type="term" value="C:ribonucleoprotein complex"/>
    <property type="evidence" value="ECO:0007669"/>
    <property type="project" value="UniProtKB-KW"/>
</dbReference>
<dbReference type="GO" id="GO:0005840">
    <property type="term" value="C:ribosome"/>
    <property type="evidence" value="ECO:0007669"/>
    <property type="project" value="UniProtKB-KW"/>
</dbReference>
<dbReference type="GO" id="GO:0019843">
    <property type="term" value="F:rRNA binding"/>
    <property type="evidence" value="ECO:0007669"/>
    <property type="project" value="UniProtKB-UniRule"/>
</dbReference>
<dbReference type="GO" id="GO:0003735">
    <property type="term" value="F:structural constituent of ribosome"/>
    <property type="evidence" value="ECO:0007669"/>
    <property type="project" value="InterPro"/>
</dbReference>
<dbReference type="GO" id="GO:0000049">
    <property type="term" value="F:tRNA binding"/>
    <property type="evidence" value="ECO:0007669"/>
    <property type="project" value="UniProtKB-UniRule"/>
</dbReference>
<dbReference type="GO" id="GO:0006412">
    <property type="term" value="P:translation"/>
    <property type="evidence" value="ECO:0007669"/>
    <property type="project" value="UniProtKB-UniRule"/>
</dbReference>
<dbReference type="FunFam" id="3.30.1440.10:FF:000001">
    <property type="entry name" value="50S ribosomal protein L5"/>
    <property type="match status" value="1"/>
</dbReference>
<dbReference type="Gene3D" id="3.30.1440.10">
    <property type="match status" value="1"/>
</dbReference>
<dbReference type="HAMAP" id="MF_01333_B">
    <property type="entry name" value="Ribosomal_uL5_B"/>
    <property type="match status" value="1"/>
</dbReference>
<dbReference type="InterPro" id="IPR002132">
    <property type="entry name" value="Ribosomal_uL5"/>
</dbReference>
<dbReference type="InterPro" id="IPR020930">
    <property type="entry name" value="Ribosomal_uL5_bac-type"/>
</dbReference>
<dbReference type="InterPro" id="IPR031309">
    <property type="entry name" value="Ribosomal_uL5_C"/>
</dbReference>
<dbReference type="InterPro" id="IPR020929">
    <property type="entry name" value="Ribosomal_uL5_CS"/>
</dbReference>
<dbReference type="InterPro" id="IPR022803">
    <property type="entry name" value="Ribosomal_uL5_dom_sf"/>
</dbReference>
<dbReference type="InterPro" id="IPR031310">
    <property type="entry name" value="Ribosomal_uL5_N"/>
</dbReference>
<dbReference type="NCBIfam" id="NF000585">
    <property type="entry name" value="PRK00010.1"/>
    <property type="match status" value="1"/>
</dbReference>
<dbReference type="PANTHER" id="PTHR11994">
    <property type="entry name" value="60S RIBOSOMAL PROTEIN L11-RELATED"/>
    <property type="match status" value="1"/>
</dbReference>
<dbReference type="Pfam" id="PF00281">
    <property type="entry name" value="Ribosomal_L5"/>
    <property type="match status" value="1"/>
</dbReference>
<dbReference type="Pfam" id="PF00673">
    <property type="entry name" value="Ribosomal_L5_C"/>
    <property type="match status" value="1"/>
</dbReference>
<dbReference type="PIRSF" id="PIRSF002161">
    <property type="entry name" value="Ribosomal_L5"/>
    <property type="match status" value="1"/>
</dbReference>
<dbReference type="SUPFAM" id="SSF55282">
    <property type="entry name" value="RL5-like"/>
    <property type="match status" value="1"/>
</dbReference>
<dbReference type="PROSITE" id="PS00358">
    <property type="entry name" value="RIBOSOMAL_L5"/>
    <property type="match status" value="1"/>
</dbReference>
<reference key="1">
    <citation type="journal article" date="2005" name="Genome Res.">
        <title>Coping with cold: the genome of the versatile marine Antarctica bacterium Pseudoalteromonas haloplanktis TAC125.</title>
        <authorList>
            <person name="Medigue C."/>
            <person name="Krin E."/>
            <person name="Pascal G."/>
            <person name="Barbe V."/>
            <person name="Bernsel A."/>
            <person name="Bertin P.N."/>
            <person name="Cheung F."/>
            <person name="Cruveiller S."/>
            <person name="D'Amico S."/>
            <person name="Duilio A."/>
            <person name="Fang G."/>
            <person name="Feller G."/>
            <person name="Ho C."/>
            <person name="Mangenot S."/>
            <person name="Marino G."/>
            <person name="Nilsson J."/>
            <person name="Parrilli E."/>
            <person name="Rocha E.P.C."/>
            <person name="Rouy Z."/>
            <person name="Sekowska A."/>
            <person name="Tutino M.L."/>
            <person name="Vallenet D."/>
            <person name="von Heijne G."/>
            <person name="Danchin A."/>
        </authorList>
    </citation>
    <scope>NUCLEOTIDE SEQUENCE [LARGE SCALE GENOMIC DNA]</scope>
    <source>
        <strain>TAC 125</strain>
    </source>
</reference>
<feature type="chain" id="PRO_0000243041" description="Large ribosomal subunit protein uL5">
    <location>
        <begin position="1"/>
        <end position="179"/>
    </location>
</feature>